<gene>
    <name evidence="6" type="primary">wapl-1</name>
    <name evidence="6" type="ORF">R08C7.10</name>
</gene>
<keyword id="KW-0227">DNA damage</keyword>
<keyword id="KW-0234">DNA repair</keyword>
<keyword id="KW-0469">Meiosis</keyword>
<keyword id="KW-0539">Nucleus</keyword>
<keyword id="KW-1185">Reference proteome</keyword>
<protein>
    <recommendedName>
        <fullName evidence="6">Wings apart-like protein homolog 1</fullName>
    </recommendedName>
</protein>
<dbReference type="EMBL" id="BX284604">
    <property type="protein sequence ID" value="CCD73092.1"/>
    <property type="molecule type" value="Genomic_DNA"/>
</dbReference>
<dbReference type="RefSeq" id="NP_500566.1">
    <property type="nucleotide sequence ID" value="NM_068165.6"/>
</dbReference>
<dbReference type="SMR" id="H2L0H5"/>
<dbReference type="FunCoup" id="H2L0H5">
    <property type="interactions" value="1864"/>
</dbReference>
<dbReference type="STRING" id="6239.R08C7.10b.1"/>
<dbReference type="PaxDb" id="6239-R08C7.10b"/>
<dbReference type="PeptideAtlas" id="H2L0H5"/>
<dbReference type="EnsemblMetazoa" id="R08C7.10b.1">
    <property type="protein sequence ID" value="R08C7.10b.1"/>
    <property type="gene ID" value="WBGene00019953"/>
</dbReference>
<dbReference type="GeneID" id="177211"/>
<dbReference type="KEGG" id="cel:CELE_R08C7.10"/>
<dbReference type="AGR" id="WB:WBGene00019953"/>
<dbReference type="CTD" id="177211"/>
<dbReference type="WormBase" id="R08C7.10b">
    <property type="protein sequence ID" value="CE28750"/>
    <property type="gene ID" value="WBGene00019953"/>
    <property type="gene designation" value="wapl-1"/>
</dbReference>
<dbReference type="eggNOG" id="KOG2152">
    <property type="taxonomic scope" value="Eukaryota"/>
</dbReference>
<dbReference type="HOGENOM" id="CLU_371419_0_0_1"/>
<dbReference type="InParanoid" id="H2L0H5"/>
<dbReference type="OMA" id="ENELCCT"/>
<dbReference type="OrthoDB" id="78088at2759"/>
<dbReference type="PhylomeDB" id="H2L0H5"/>
<dbReference type="Reactome" id="R-CEL-2468052">
    <property type="pathway name" value="Establishment of Sister Chromatid Cohesion"/>
</dbReference>
<dbReference type="Reactome" id="R-CEL-2470946">
    <property type="pathway name" value="Cohesin Loading onto Chromatin"/>
</dbReference>
<dbReference type="Reactome" id="R-CEL-2500257">
    <property type="pathway name" value="Resolution of Sister Chromatid Cohesion"/>
</dbReference>
<dbReference type="PRO" id="PR:H2L0H5"/>
<dbReference type="Proteomes" id="UP000001940">
    <property type="component" value="Chromosome IV"/>
</dbReference>
<dbReference type="Bgee" id="WBGene00019953">
    <property type="expression patterns" value="Expressed in germ line (C elegans) and 4 other cell types or tissues"/>
</dbReference>
<dbReference type="ExpressionAtlas" id="H2L0H5">
    <property type="expression patterns" value="baseline and differential"/>
</dbReference>
<dbReference type="GO" id="GO:0043073">
    <property type="term" value="C:germ cell nucleus"/>
    <property type="evidence" value="ECO:0000314"/>
    <property type="project" value="WormBase"/>
</dbReference>
<dbReference type="GO" id="GO:0140083">
    <property type="term" value="F:ATP-dependent protein-DNA unloader activity"/>
    <property type="evidence" value="ECO:0000250"/>
    <property type="project" value="WormBase"/>
</dbReference>
<dbReference type="GO" id="GO:0140670">
    <property type="term" value="F:cohesin unloader activity"/>
    <property type="evidence" value="ECO:0000315"/>
    <property type="project" value="WormBase"/>
</dbReference>
<dbReference type="GO" id="GO:0006281">
    <property type="term" value="P:DNA repair"/>
    <property type="evidence" value="ECO:0007669"/>
    <property type="project" value="UniProtKB-KW"/>
</dbReference>
<dbReference type="GO" id="GO:0051321">
    <property type="term" value="P:meiotic cell cycle"/>
    <property type="evidence" value="ECO:0007669"/>
    <property type="project" value="UniProtKB-KW"/>
</dbReference>
<dbReference type="GO" id="GO:0000070">
    <property type="term" value="P:mitotic sister chromatid segregation"/>
    <property type="evidence" value="ECO:0000250"/>
    <property type="project" value="WormBase"/>
</dbReference>
<dbReference type="GO" id="GO:1905168">
    <property type="term" value="P:positive regulation of double-strand break repair via homologous recombination"/>
    <property type="evidence" value="ECO:0000315"/>
    <property type="project" value="WormBase"/>
</dbReference>
<dbReference type="Gene3D" id="1.25.10.10">
    <property type="entry name" value="Leucine-rich Repeat Variant"/>
    <property type="match status" value="1"/>
</dbReference>
<dbReference type="InterPro" id="IPR011989">
    <property type="entry name" value="ARM-like"/>
</dbReference>
<dbReference type="InterPro" id="IPR016024">
    <property type="entry name" value="ARM-type_fold"/>
</dbReference>
<dbReference type="InterPro" id="IPR039874">
    <property type="entry name" value="WAPL"/>
</dbReference>
<dbReference type="InterPro" id="IPR022771">
    <property type="entry name" value="WAPL_C"/>
</dbReference>
<dbReference type="InterPro" id="IPR012502">
    <property type="entry name" value="WAPL_dom"/>
</dbReference>
<dbReference type="PANTHER" id="PTHR22100">
    <property type="entry name" value="WINGS APART-LIKE PROTEIN HOMOLOG"/>
    <property type="match status" value="1"/>
</dbReference>
<dbReference type="PANTHER" id="PTHR22100:SF13">
    <property type="entry name" value="WINGS APART-LIKE PROTEIN HOMOLOG"/>
    <property type="match status" value="1"/>
</dbReference>
<dbReference type="Pfam" id="PF07814">
    <property type="entry name" value="WAPL"/>
    <property type="match status" value="1"/>
</dbReference>
<dbReference type="SUPFAM" id="SSF48371">
    <property type="entry name" value="ARM repeat"/>
    <property type="match status" value="1"/>
</dbReference>
<dbReference type="PROSITE" id="PS51271">
    <property type="entry name" value="WAPL"/>
    <property type="match status" value="1"/>
</dbReference>
<accession>H2L0H5</accession>
<proteinExistence type="inferred from homology"/>
<evidence type="ECO:0000255" key="1">
    <source>
        <dbReference type="PROSITE-ProRule" id="PRU00603"/>
    </source>
</evidence>
<evidence type="ECO:0000256" key="2">
    <source>
        <dbReference type="SAM" id="MobiDB-lite"/>
    </source>
</evidence>
<evidence type="ECO:0000269" key="3">
    <source>
    </source>
</evidence>
<evidence type="ECO:0000269" key="4">
    <source>
    </source>
</evidence>
<evidence type="ECO:0000305" key="5"/>
<evidence type="ECO:0000312" key="6">
    <source>
        <dbReference type="WormBase" id="R08C7.10b"/>
    </source>
</evidence>
<name>WAPL_CAEEL</name>
<sequence>MSSDANSDDPFSKPIVRKRFQATLAQQGIEDDQLPSVRSSDSPDVPDTPDVPVNQLSSPPLSLPETLSEGNAETLQNLSDDSEPEMLSQSSTSSLNRRMEDSAIDPSRGTRKSQSRGFDYDPAGERTTAPVQKKKKDEIDMGGAKFFPKQEKKHVYTHKWTTEEDDEDEKTISSSSNRYSSRPNQPAVSARPRQPVYATTSTYSKPLASGYGSRVRHIKEANELRESGEYDDFKQDLVYILSSLQSSDASMKVKCLSAISLAKKCVSPDFRQFIKSENMTKSIVKALMDSPEDDLFALAASTVLYLLTRDFNSIKIDFPSLRLVSQLLRIEKFEQRPEDKDKVVNMVWEVFNSYIEKQEVGGQKVSFDMRKESLTPSSLIIEALVFICSRSVNDDNLKSELLNLGILQFVVAKIETNVNLIADNADDTYSILILNRCFRILESSSVFHKKNQAFLISHRSNILISSLAKFLQVILDRVHQLAEEEVKKYISCLALMCRLLINISHDNELCCSKLGQIEGFLPNAITTFTYLAPKFGKENSYDINVMMTSLLTNLVERCNANRKVLIAQTVKMVIPGHDVEEVPALEAITRLFVYHESQAQIVDADLDRELAFDEGGCGDEEEEEEGGDESSDEDGVRKDGRLDRNKMDRMDQVDVVHALQQVMNKASAHMEGSVIASYHALLVGFVLQQNEDHLDEVRKHLPGKNFQNMISQLKRLYDFTKATMAKRVESNSGFRAIERVIEYLERLE</sequence>
<organism>
    <name type="scientific">Caenorhabditis elegans</name>
    <dbReference type="NCBI Taxonomy" id="6239"/>
    <lineage>
        <taxon>Eukaryota</taxon>
        <taxon>Metazoa</taxon>
        <taxon>Ecdysozoa</taxon>
        <taxon>Nematoda</taxon>
        <taxon>Chromadorea</taxon>
        <taxon>Rhabditida</taxon>
        <taxon>Rhabditina</taxon>
        <taxon>Rhabditomorpha</taxon>
        <taxon>Rhabditoidea</taxon>
        <taxon>Rhabditidae</taxon>
        <taxon>Peloderinae</taxon>
        <taxon>Caenorhabditis</taxon>
    </lineage>
</organism>
<comment type="function">
    <text evidence="3 4">Regulator of meiotic chromosome structure and function, playing a role in sister chromatid cohesion, possibly via antagonizing the coh-3/-4 association with axial elements in nuclei during late prophase, cohesin association with chromatin, DNA double strand break repair and polar body positioning following meiotic divisions during oogenesis (PubMed:26841696). Regulates the morphogenesis and temporal assembly of axial elements to control the organization of meiotic chromosomes in pachytene nuclei and is also involved in meiotic chromosomal remodeling in late pachytene nuclei (PubMed:26841696). Required for the removal of the cohesin component scc-1 from mitotic chromosomes (PubMed:18202360).</text>
</comment>
<comment type="subcellular location">
    <subcellularLocation>
        <location evidence="4">Nucleus</location>
    </subcellularLocation>
    <text evidence="4">Expressed in mitotic and meiotic nuclei, with low expression in nuclei during the early meiotic prophase stages leptotene and zygotene, and increased expression in late pachytene nuclei which then continues to remain high in diplotene and diakinesis oocytes.</text>
</comment>
<comment type="disruption phenotype">
    <text evidence="3 4">Mutants have an egg-laying defect and reduced brood size with 20.8% displaying embryonic lethality whilst 28.38% arrest at the larval stage. Recombination intermediates accumulate in mid pachytene nuclei resulting in delayed meiotic double stranded break repair. Irregular polar body extrusion from the egg pronucleus and localization following meiotic divisions which can lead to aneuploidy in the embryo. Altered meiotic chromosomal organization due to shorter axial elements in late pachytene nuclei. Defective chromatin remodeling in late pachytene meiotic chromosomes characterized by increased cohesin associated with diplotene chromosomes, but reduced association in late diakinesis oocytes, changes in axial element composition including absent axial element coiling, accumulation of cohesin and a more linear appearance of axial elements, and altered disassembly of the synaptonemal complex in diplotene and diakinesis oocytes (PubMed:26841696). RNAi-mediated knockdown leads to aberrant localization of the cohesin component scc-1 to mitotic metaphase chromosomes (PubMed:18202360).</text>
</comment>
<comment type="similarity">
    <text evidence="5">Belongs to the WAPL family.</text>
</comment>
<feature type="chain" id="PRO_0000436007" description="Wings apart-like protein homolog 1" evidence="5">
    <location>
        <begin position="1"/>
        <end position="748"/>
    </location>
</feature>
<feature type="domain" description="WAPL" evidence="1">
    <location>
        <begin position="205"/>
        <end position="723"/>
    </location>
</feature>
<feature type="region of interest" description="Disordered" evidence="2">
    <location>
        <begin position="23"/>
        <end position="199"/>
    </location>
</feature>
<feature type="region of interest" description="Disordered" evidence="2">
    <location>
        <begin position="614"/>
        <end position="644"/>
    </location>
</feature>
<feature type="compositionally biased region" description="Low complexity" evidence="2">
    <location>
        <begin position="35"/>
        <end position="64"/>
    </location>
</feature>
<feature type="compositionally biased region" description="Polar residues" evidence="2">
    <location>
        <begin position="68"/>
        <end position="79"/>
    </location>
</feature>
<feature type="compositionally biased region" description="Polar residues" evidence="2">
    <location>
        <begin position="87"/>
        <end position="96"/>
    </location>
</feature>
<feature type="compositionally biased region" description="Low complexity" evidence="2">
    <location>
        <begin position="172"/>
        <end position="182"/>
    </location>
</feature>
<feature type="compositionally biased region" description="Acidic residues" evidence="2">
    <location>
        <begin position="616"/>
        <end position="633"/>
    </location>
</feature>
<feature type="compositionally biased region" description="Basic and acidic residues" evidence="2">
    <location>
        <begin position="634"/>
        <end position="644"/>
    </location>
</feature>
<reference key="1">
    <citation type="journal article" date="1998" name="Science">
        <title>Genome sequence of the nematode C. elegans: a platform for investigating biology.</title>
        <authorList>
            <consortium name="The C. elegans sequencing consortium"/>
        </authorList>
    </citation>
    <scope>NUCLEOTIDE SEQUENCE [LARGE SCALE GENOMIC DNA]</scope>
    <source>
        <strain>Bristol N2</strain>
    </source>
</reference>
<reference key="2">
    <citation type="journal article" date="2008" name="Genetics">
        <title>cin-4, a gene with homology to topoisomerase II, is required for centromere resolution by cohesin removal from sister kinetochores during mitosis.</title>
        <authorList>
            <person name="Stanvitch G."/>
            <person name="Moore L.L."/>
        </authorList>
    </citation>
    <scope>FUNCTION</scope>
    <scope>DISRUPTION PHENOTYPE</scope>
</reference>
<reference key="3">
    <citation type="journal article" date="2016" name="Elife">
        <title>Cohesin-interacting protein WAPL-1 regulates meiotic chromosome structure and cohesion by antagonizing specific cohesin complexes.</title>
        <authorList>
            <person name="Crawley O."/>
            <person name="Barroso C."/>
            <person name="Testori S."/>
            <person name="Ferrandiz N."/>
            <person name="Silva N."/>
            <person name="Castellano-Pozo M."/>
            <person name="Jaso-Tamame A.L."/>
            <person name="Martinez-Perez E."/>
        </authorList>
    </citation>
    <scope>FUNCTION</scope>
    <scope>SUBCELLULAR LOCATION</scope>
    <scope>DISRUPTION PHENOTYPE</scope>
</reference>